<gene>
    <name evidence="1" type="primary">proB</name>
    <name type="ordered locus">EcHS_A0269</name>
</gene>
<proteinExistence type="inferred from homology"/>
<sequence>MSDSQTLVVKLGTSVLTGGSRRLNRAHIVELVRQCAQLHAAGHRIVIVTSGAIAAGREHLGYPELPATIASKQLLAAVGQSRLIQLWEQLFSIYGIHVGQMLLTRADMEDRERFLNARDTLRALLDNNIVPVINENDAVATAEIKVGDNDNLSALAAILAGADKLLLLTDQKGLYTADPRSNPQAELIKDVYGIDDALRAIAGDSVSGLGTGGMSTKLQAADVACRAGIDTIIAAGSKPGVIGDVMEGISVGTLFHAQATPLENRKRWIFGAPPAGEITVDEGATAAILERGSSLLPKGIKSVTGNFSRGEVIRICNLEGRDIAHGVSRYNSDALRRIAGHHSQEIDAILGYEYGPVAVHRDDMITR</sequence>
<dbReference type="EC" id="2.7.2.11" evidence="1"/>
<dbReference type="EMBL" id="CP000802">
    <property type="protein sequence ID" value="ABV04659.1"/>
    <property type="molecule type" value="Genomic_DNA"/>
</dbReference>
<dbReference type="RefSeq" id="WP_001285288.1">
    <property type="nucleotide sequence ID" value="NC_009800.1"/>
</dbReference>
<dbReference type="SMR" id="A7ZWK5"/>
<dbReference type="GeneID" id="93777151"/>
<dbReference type="KEGG" id="ecx:EcHS_A0269"/>
<dbReference type="HOGENOM" id="CLU_025400_2_0_6"/>
<dbReference type="UniPathway" id="UPA00098">
    <property type="reaction ID" value="UER00359"/>
</dbReference>
<dbReference type="GO" id="GO:0005829">
    <property type="term" value="C:cytosol"/>
    <property type="evidence" value="ECO:0007669"/>
    <property type="project" value="TreeGrafter"/>
</dbReference>
<dbReference type="GO" id="GO:0005524">
    <property type="term" value="F:ATP binding"/>
    <property type="evidence" value="ECO:0007669"/>
    <property type="project" value="UniProtKB-KW"/>
</dbReference>
<dbReference type="GO" id="GO:0004349">
    <property type="term" value="F:glutamate 5-kinase activity"/>
    <property type="evidence" value="ECO:0007669"/>
    <property type="project" value="UniProtKB-UniRule"/>
</dbReference>
<dbReference type="GO" id="GO:0003723">
    <property type="term" value="F:RNA binding"/>
    <property type="evidence" value="ECO:0007669"/>
    <property type="project" value="InterPro"/>
</dbReference>
<dbReference type="GO" id="GO:0055129">
    <property type="term" value="P:L-proline biosynthetic process"/>
    <property type="evidence" value="ECO:0007669"/>
    <property type="project" value="UniProtKB-UniRule"/>
</dbReference>
<dbReference type="CDD" id="cd04242">
    <property type="entry name" value="AAK_G5K_ProB"/>
    <property type="match status" value="1"/>
</dbReference>
<dbReference type="CDD" id="cd21157">
    <property type="entry name" value="PUA_G5K"/>
    <property type="match status" value="1"/>
</dbReference>
<dbReference type="FunFam" id="2.30.130.10:FF:000003">
    <property type="entry name" value="Glutamate 5-kinase"/>
    <property type="match status" value="1"/>
</dbReference>
<dbReference type="FunFam" id="3.40.1160.10:FF:000006">
    <property type="entry name" value="Glutamate 5-kinase"/>
    <property type="match status" value="1"/>
</dbReference>
<dbReference type="Gene3D" id="3.40.1160.10">
    <property type="entry name" value="Acetylglutamate kinase-like"/>
    <property type="match status" value="2"/>
</dbReference>
<dbReference type="Gene3D" id="2.30.130.10">
    <property type="entry name" value="PUA domain"/>
    <property type="match status" value="1"/>
</dbReference>
<dbReference type="HAMAP" id="MF_00456">
    <property type="entry name" value="ProB"/>
    <property type="match status" value="1"/>
</dbReference>
<dbReference type="InterPro" id="IPR036393">
    <property type="entry name" value="AceGlu_kinase-like_sf"/>
</dbReference>
<dbReference type="InterPro" id="IPR001048">
    <property type="entry name" value="Asp/Glu/Uridylate_kinase"/>
</dbReference>
<dbReference type="InterPro" id="IPR041739">
    <property type="entry name" value="G5K_ProB"/>
</dbReference>
<dbReference type="InterPro" id="IPR001057">
    <property type="entry name" value="Glu/AcGlu_kinase"/>
</dbReference>
<dbReference type="InterPro" id="IPR011529">
    <property type="entry name" value="Glu_5kinase"/>
</dbReference>
<dbReference type="InterPro" id="IPR005715">
    <property type="entry name" value="Glu_5kinase/COase_Synthase"/>
</dbReference>
<dbReference type="InterPro" id="IPR019797">
    <property type="entry name" value="Glutamate_5-kinase_CS"/>
</dbReference>
<dbReference type="InterPro" id="IPR002478">
    <property type="entry name" value="PUA"/>
</dbReference>
<dbReference type="InterPro" id="IPR015947">
    <property type="entry name" value="PUA-like_sf"/>
</dbReference>
<dbReference type="InterPro" id="IPR036974">
    <property type="entry name" value="PUA_sf"/>
</dbReference>
<dbReference type="NCBIfam" id="TIGR01027">
    <property type="entry name" value="proB"/>
    <property type="match status" value="1"/>
</dbReference>
<dbReference type="PANTHER" id="PTHR43654">
    <property type="entry name" value="GLUTAMATE 5-KINASE"/>
    <property type="match status" value="1"/>
</dbReference>
<dbReference type="PANTHER" id="PTHR43654:SF1">
    <property type="entry name" value="ISOPENTENYL PHOSPHATE KINASE"/>
    <property type="match status" value="1"/>
</dbReference>
<dbReference type="Pfam" id="PF00696">
    <property type="entry name" value="AA_kinase"/>
    <property type="match status" value="1"/>
</dbReference>
<dbReference type="Pfam" id="PF01472">
    <property type="entry name" value="PUA"/>
    <property type="match status" value="1"/>
</dbReference>
<dbReference type="PIRSF" id="PIRSF000729">
    <property type="entry name" value="GK"/>
    <property type="match status" value="1"/>
</dbReference>
<dbReference type="PRINTS" id="PR00474">
    <property type="entry name" value="GLU5KINASE"/>
</dbReference>
<dbReference type="SMART" id="SM00359">
    <property type="entry name" value="PUA"/>
    <property type="match status" value="1"/>
</dbReference>
<dbReference type="SUPFAM" id="SSF53633">
    <property type="entry name" value="Carbamate kinase-like"/>
    <property type="match status" value="1"/>
</dbReference>
<dbReference type="SUPFAM" id="SSF88697">
    <property type="entry name" value="PUA domain-like"/>
    <property type="match status" value="1"/>
</dbReference>
<dbReference type="PROSITE" id="PS00902">
    <property type="entry name" value="GLUTAMATE_5_KINASE"/>
    <property type="match status" value="1"/>
</dbReference>
<dbReference type="PROSITE" id="PS50890">
    <property type="entry name" value="PUA"/>
    <property type="match status" value="1"/>
</dbReference>
<evidence type="ECO:0000255" key="1">
    <source>
        <dbReference type="HAMAP-Rule" id="MF_00456"/>
    </source>
</evidence>
<organism>
    <name type="scientific">Escherichia coli O9:H4 (strain HS)</name>
    <dbReference type="NCBI Taxonomy" id="331112"/>
    <lineage>
        <taxon>Bacteria</taxon>
        <taxon>Pseudomonadati</taxon>
        <taxon>Pseudomonadota</taxon>
        <taxon>Gammaproteobacteria</taxon>
        <taxon>Enterobacterales</taxon>
        <taxon>Enterobacteriaceae</taxon>
        <taxon>Escherichia</taxon>
    </lineage>
</organism>
<keyword id="KW-0028">Amino-acid biosynthesis</keyword>
<keyword id="KW-0067">ATP-binding</keyword>
<keyword id="KW-0963">Cytoplasm</keyword>
<keyword id="KW-0418">Kinase</keyword>
<keyword id="KW-0547">Nucleotide-binding</keyword>
<keyword id="KW-0641">Proline biosynthesis</keyword>
<keyword id="KW-0808">Transferase</keyword>
<name>PROB_ECOHS</name>
<comment type="function">
    <text evidence="1">Catalyzes the transfer of a phosphate group to glutamate to form L-glutamate 5-phosphate.</text>
</comment>
<comment type="catalytic activity">
    <reaction evidence="1">
        <text>L-glutamate + ATP = L-glutamyl 5-phosphate + ADP</text>
        <dbReference type="Rhea" id="RHEA:14877"/>
        <dbReference type="ChEBI" id="CHEBI:29985"/>
        <dbReference type="ChEBI" id="CHEBI:30616"/>
        <dbReference type="ChEBI" id="CHEBI:58274"/>
        <dbReference type="ChEBI" id="CHEBI:456216"/>
        <dbReference type="EC" id="2.7.2.11"/>
    </reaction>
</comment>
<comment type="pathway">
    <text evidence="1">Amino-acid biosynthesis; L-proline biosynthesis; L-glutamate 5-semialdehyde from L-glutamate: step 1/2.</text>
</comment>
<comment type="subcellular location">
    <subcellularLocation>
        <location evidence="1">Cytoplasm</location>
    </subcellularLocation>
</comment>
<comment type="similarity">
    <text evidence="1">Belongs to the glutamate 5-kinase family.</text>
</comment>
<accession>A7ZWK5</accession>
<reference key="1">
    <citation type="journal article" date="2008" name="J. Bacteriol.">
        <title>The pangenome structure of Escherichia coli: comparative genomic analysis of E. coli commensal and pathogenic isolates.</title>
        <authorList>
            <person name="Rasko D.A."/>
            <person name="Rosovitz M.J."/>
            <person name="Myers G.S.A."/>
            <person name="Mongodin E.F."/>
            <person name="Fricke W.F."/>
            <person name="Gajer P."/>
            <person name="Crabtree J."/>
            <person name="Sebaihia M."/>
            <person name="Thomson N.R."/>
            <person name="Chaudhuri R."/>
            <person name="Henderson I.R."/>
            <person name="Sperandio V."/>
            <person name="Ravel J."/>
        </authorList>
    </citation>
    <scope>NUCLEOTIDE SEQUENCE [LARGE SCALE GENOMIC DNA]</scope>
    <source>
        <strain>HS</strain>
    </source>
</reference>
<feature type="chain" id="PRO_1000081057" description="Glutamate 5-kinase">
    <location>
        <begin position="1"/>
        <end position="367"/>
    </location>
</feature>
<feature type="domain" description="PUA" evidence="1">
    <location>
        <begin position="275"/>
        <end position="353"/>
    </location>
</feature>
<feature type="binding site" evidence="1">
    <location>
        <position position="10"/>
    </location>
    <ligand>
        <name>ATP</name>
        <dbReference type="ChEBI" id="CHEBI:30616"/>
    </ligand>
</feature>
<feature type="binding site" evidence="1">
    <location>
        <position position="50"/>
    </location>
    <ligand>
        <name>substrate</name>
    </ligand>
</feature>
<feature type="binding site" evidence="1">
    <location>
        <position position="137"/>
    </location>
    <ligand>
        <name>substrate</name>
    </ligand>
</feature>
<feature type="binding site" evidence="1">
    <location>
        <position position="149"/>
    </location>
    <ligand>
        <name>substrate</name>
    </ligand>
</feature>
<feature type="binding site" evidence="1">
    <location>
        <begin position="169"/>
        <end position="170"/>
    </location>
    <ligand>
        <name>ATP</name>
        <dbReference type="ChEBI" id="CHEBI:30616"/>
    </ligand>
</feature>
<feature type="binding site" evidence="1">
    <location>
        <begin position="211"/>
        <end position="217"/>
    </location>
    <ligand>
        <name>ATP</name>
        <dbReference type="ChEBI" id="CHEBI:30616"/>
    </ligand>
</feature>
<protein>
    <recommendedName>
        <fullName evidence="1">Glutamate 5-kinase</fullName>
        <ecNumber evidence="1">2.7.2.11</ecNumber>
    </recommendedName>
    <alternativeName>
        <fullName evidence="1">Gamma-glutamyl kinase</fullName>
        <shortName evidence="1">GK</shortName>
    </alternativeName>
</protein>